<dbReference type="EMBL" id="CH479181">
    <property type="protein sequence ID" value="EDW32211.1"/>
    <property type="status" value="ALT_SEQ"/>
    <property type="molecule type" value="Genomic_DNA"/>
</dbReference>
<dbReference type="SMR" id="B4GBA9"/>
<dbReference type="STRING" id="7234.B4GBA9"/>
<dbReference type="GeneID" id="6590154"/>
<dbReference type="KEGG" id="dpe:6590154"/>
<dbReference type="eggNOG" id="ENOG502T9CV">
    <property type="taxonomic scope" value="Eukaryota"/>
</dbReference>
<dbReference type="OrthoDB" id="8067562at2759"/>
<dbReference type="Proteomes" id="UP000008744">
    <property type="component" value="Unassembled WGS sequence"/>
</dbReference>
<dbReference type="GO" id="GO:0030849">
    <property type="term" value="C:autosome"/>
    <property type="evidence" value="ECO:0000250"/>
    <property type="project" value="UniProtKB"/>
</dbReference>
<dbReference type="GO" id="GO:0005634">
    <property type="term" value="C:nucleus"/>
    <property type="evidence" value="ECO:0007669"/>
    <property type="project" value="UniProtKB-SubCell"/>
</dbReference>
<dbReference type="GO" id="GO:0008270">
    <property type="term" value="F:zinc ion binding"/>
    <property type="evidence" value="ECO:0007669"/>
    <property type="project" value="UniProtKB-KW"/>
</dbReference>
<dbReference type="GO" id="GO:0051308">
    <property type="term" value="P:male meiosis chromosome separation"/>
    <property type="evidence" value="ECO:0000250"/>
    <property type="project" value="UniProtKB"/>
</dbReference>
<dbReference type="Gene3D" id="3.30.160.60">
    <property type="entry name" value="Classic Zinc Finger"/>
    <property type="match status" value="1"/>
</dbReference>
<dbReference type="InterPro" id="IPR036236">
    <property type="entry name" value="Znf_C2H2_sf"/>
</dbReference>
<dbReference type="InterPro" id="IPR013087">
    <property type="entry name" value="Znf_C2H2_type"/>
</dbReference>
<dbReference type="SMART" id="SM00355">
    <property type="entry name" value="ZnF_C2H2"/>
    <property type="match status" value="3"/>
</dbReference>
<dbReference type="SUPFAM" id="SSF57667">
    <property type="entry name" value="beta-beta-alpha zinc fingers"/>
    <property type="match status" value="1"/>
</dbReference>
<dbReference type="PROSITE" id="PS00028">
    <property type="entry name" value="ZINC_FINGER_C2H2_1"/>
    <property type="match status" value="3"/>
</dbReference>
<dbReference type="PROSITE" id="PS50157">
    <property type="entry name" value="ZINC_FINGER_C2H2_2"/>
    <property type="match status" value="2"/>
</dbReference>
<organism>
    <name type="scientific">Drosophila persimilis</name>
    <name type="common">Fruit fly</name>
    <dbReference type="NCBI Taxonomy" id="7234"/>
    <lineage>
        <taxon>Eukaryota</taxon>
        <taxon>Metazoa</taxon>
        <taxon>Ecdysozoa</taxon>
        <taxon>Arthropoda</taxon>
        <taxon>Hexapoda</taxon>
        <taxon>Insecta</taxon>
        <taxon>Pterygota</taxon>
        <taxon>Neoptera</taxon>
        <taxon>Endopterygota</taxon>
        <taxon>Diptera</taxon>
        <taxon>Brachycera</taxon>
        <taxon>Muscomorpha</taxon>
        <taxon>Ephydroidea</taxon>
        <taxon>Drosophilidae</taxon>
        <taxon>Drosophila</taxon>
        <taxon>Sophophora</taxon>
    </lineage>
</organism>
<evidence type="ECO:0000250" key="1"/>
<evidence type="ECO:0000250" key="2">
    <source>
        <dbReference type="UniProtKB" id="Q7K4M4"/>
    </source>
</evidence>
<evidence type="ECO:0000255" key="3">
    <source>
        <dbReference type="PROSITE-ProRule" id="PRU00042"/>
    </source>
</evidence>
<evidence type="ECO:0000256" key="4">
    <source>
        <dbReference type="SAM" id="MobiDB-lite"/>
    </source>
</evidence>
<evidence type="ECO:0000305" key="5"/>
<evidence type="ECO:0000312" key="6">
    <source>
        <dbReference type="EMBL" id="EDW32211.1"/>
    </source>
</evidence>
<comment type="function">
    <text evidence="2">Specifically required in males for proper segregation of autosomal bivalents at meiosis I. Expression is required in the male germ line prior to spermatocyte stage S4. May have a role as a bridging molecule maintaining adhesion to hold autosome bivalents together via heterochromatic connections (By similarity).</text>
</comment>
<comment type="subcellular location">
    <subcellularLocation>
        <location evidence="2">Nucleus</location>
    </subcellularLocation>
    <subcellularLocation>
        <location evidence="1">Chromosome</location>
    </subcellularLocation>
    <text evidence="2">Male meiotic chromosomes.</text>
</comment>
<comment type="miscellaneous">
    <text evidence="2">Drosophilid specific gene duplication generates rgr and tef. Teflon has a function unique to Drosophilids.</text>
</comment>
<comment type="similarity">
    <text evidence="5">Belongs to the Teflon family.</text>
</comment>
<comment type="sequence caution" evidence="5">
    <conflict type="erroneous gene model prediction">
        <sequence resource="EMBL-CDS" id="EDW32211"/>
    </conflict>
</comment>
<gene>
    <name evidence="2" type="primary">tef</name>
    <name type="ORF">GL10555</name>
</gene>
<reference evidence="6" key="1">
    <citation type="journal article" date="2007" name="Nature">
        <title>Evolution of genes and genomes on the Drosophila phylogeny.</title>
        <authorList>
            <consortium name="Drosophila 12 genomes consortium"/>
        </authorList>
    </citation>
    <scope>NUCLEOTIDE SEQUENCE [LARGE SCALE GENOMIC DNA]</scope>
    <source>
        <strain>MSH-3 / Tucson 14011-0111.49</strain>
    </source>
</reference>
<name>TEF_DROPE</name>
<protein>
    <recommendedName>
        <fullName evidence="2">Protein teflon</fullName>
    </recommendedName>
</protein>
<feature type="chain" id="PRO_0000377409" description="Protein teflon">
    <location>
        <begin position="1"/>
        <end position="703"/>
    </location>
</feature>
<feature type="zinc finger region" description="C2H2-type 1" evidence="3">
    <location>
        <begin position="32"/>
        <end position="55"/>
    </location>
</feature>
<feature type="zinc finger region" description="C2H2-type 2" evidence="3">
    <location>
        <begin position="649"/>
        <end position="672"/>
    </location>
</feature>
<feature type="zinc finger region" description="C2H2-type 3" evidence="3">
    <location>
        <begin position="677"/>
        <end position="700"/>
    </location>
</feature>
<feature type="region of interest" description="Disordered" evidence="4">
    <location>
        <begin position="78"/>
        <end position="111"/>
    </location>
</feature>
<feature type="region of interest" description="Disordered" evidence="4">
    <location>
        <begin position="140"/>
        <end position="161"/>
    </location>
</feature>
<feature type="region of interest" description="Disordered" evidence="4">
    <location>
        <begin position="205"/>
        <end position="239"/>
    </location>
</feature>
<feature type="region of interest" description="Disordered" evidence="4">
    <location>
        <begin position="339"/>
        <end position="434"/>
    </location>
</feature>
<feature type="compositionally biased region" description="Polar residues" evidence="4">
    <location>
        <begin position="84"/>
        <end position="94"/>
    </location>
</feature>
<feature type="compositionally biased region" description="Basic and acidic residues" evidence="4">
    <location>
        <begin position="148"/>
        <end position="161"/>
    </location>
</feature>
<feature type="compositionally biased region" description="Polar residues" evidence="4">
    <location>
        <begin position="339"/>
        <end position="352"/>
    </location>
</feature>
<feature type="compositionally biased region" description="Polar residues" evidence="4">
    <location>
        <begin position="364"/>
        <end position="373"/>
    </location>
</feature>
<keyword id="KW-0131">Cell cycle</keyword>
<keyword id="KW-0158">Chromosome</keyword>
<keyword id="KW-0159">Chromosome partition</keyword>
<keyword id="KW-0469">Meiosis</keyword>
<keyword id="KW-0479">Metal-binding</keyword>
<keyword id="KW-0539">Nucleus</keyword>
<keyword id="KW-1185">Reference proteome</keyword>
<keyword id="KW-0677">Repeat</keyword>
<keyword id="KW-0862">Zinc</keyword>
<keyword id="KW-0863">Zinc-finger</keyword>
<sequence length="703" mass="80065">MSSFLDILGDGHVNFEKCGDVVVSPKDNMVAMLCHFCKDIFTHLPEFMRHLQWSHSDVLQFTKEQNVYRVEELMSLESSEDDVQSQANSCSSGDSGLAGEMEDADGEPGSSECLANNVEIMNALAAFDVDVDVLNNVSHEQSYSKNPPDSRTEGFRCARKPGRVEKPPSICDLKSYNITRHSRKREAIKQRLSSVKKRIMRSLENDVSKPRLNKLRSKLNNSLSSNISGPPKQSKMPSLLENSSVNELPAVLESTNPPSFDSEQPYVVSTTIKPSIRPCPSRTAVQTDRNISHQPVARRSTVNIERVDILPPINIKQKMKMSAKDIPFWESIIISSVASQQPSELNTTNNAVDQPPKRPERRSSLTVISSSPIQAMKPMRRSSMTRENTSPESSRILRSGEVESPAKANKRTKDSFEETSSSNEKGNAKRSKLEQNRCSMNFSLSASVTEYIRSDLKTSKLDLDSLLRLTEPLESDAFENTLVEDQVKNATKMGSPQKEFTKLQIGVKPEMEALKEDLRLLKTVGLLVLKDSCFEDKLPFEQSESFRKTAAKFSKIYHTYDTIWSYRKTKTIGVHQRLTEQLNSFTEEVNREIDCHLTTNEIKRILNLINSWYAYQIDQRFFRKATLSYSVEHYMFLFHFLPKINPTVYFCECCEEIFPNEARYKKHVQSVHAVHAFTCSECGKSFKRLYFYDKHLKTVHLKP</sequence>
<proteinExistence type="inferred from homology"/>
<accession>B4GBA9</accession>